<gene>
    <name type="primary">Chd2</name>
</gene>
<evidence type="ECO:0000250" key="1">
    <source>
        <dbReference type="UniProtKB" id="O14646"/>
    </source>
</evidence>
<evidence type="ECO:0000250" key="2">
    <source>
        <dbReference type="UniProtKB" id="O14647"/>
    </source>
</evidence>
<evidence type="ECO:0000250" key="3">
    <source>
        <dbReference type="UniProtKB" id="Q12873"/>
    </source>
</evidence>
<evidence type="ECO:0000255" key="4">
    <source>
        <dbReference type="PROSITE-ProRule" id="PRU00053"/>
    </source>
</evidence>
<evidence type="ECO:0000255" key="5">
    <source>
        <dbReference type="PROSITE-ProRule" id="PRU00541"/>
    </source>
</evidence>
<evidence type="ECO:0000255" key="6">
    <source>
        <dbReference type="PROSITE-ProRule" id="PRU00542"/>
    </source>
</evidence>
<evidence type="ECO:0000256" key="7">
    <source>
        <dbReference type="SAM" id="MobiDB-lite"/>
    </source>
</evidence>
<evidence type="ECO:0000269" key="8">
    <source>
    </source>
</evidence>
<evidence type="ECO:0000269" key="9">
    <source>
    </source>
</evidence>
<evidence type="ECO:0000269" key="10">
    <source>
    </source>
</evidence>
<evidence type="ECO:0000269" key="11">
    <source>
    </source>
</evidence>
<evidence type="ECO:0007744" key="12">
    <source>
    </source>
</evidence>
<keyword id="KW-0067">ATP-binding</keyword>
<keyword id="KW-0156">Chromatin regulator</keyword>
<keyword id="KW-0238">DNA-binding</keyword>
<keyword id="KW-0378">Hydrolase</keyword>
<keyword id="KW-0517">Myogenesis</keyword>
<keyword id="KW-0547">Nucleotide-binding</keyword>
<keyword id="KW-0539">Nucleus</keyword>
<keyword id="KW-0597">Phosphoprotein</keyword>
<keyword id="KW-1185">Reference proteome</keyword>
<keyword id="KW-0677">Repeat</keyword>
<keyword id="KW-0804">Transcription</keyword>
<keyword id="KW-0805">Transcription regulation</keyword>
<proteinExistence type="evidence at protein level"/>
<organism>
    <name type="scientific">Mus musculus</name>
    <name type="common">Mouse</name>
    <dbReference type="NCBI Taxonomy" id="10090"/>
    <lineage>
        <taxon>Eukaryota</taxon>
        <taxon>Metazoa</taxon>
        <taxon>Chordata</taxon>
        <taxon>Craniata</taxon>
        <taxon>Vertebrata</taxon>
        <taxon>Euteleostomi</taxon>
        <taxon>Mammalia</taxon>
        <taxon>Eutheria</taxon>
        <taxon>Euarchontoglires</taxon>
        <taxon>Glires</taxon>
        <taxon>Rodentia</taxon>
        <taxon>Myomorpha</taxon>
        <taxon>Muroidea</taxon>
        <taxon>Muridae</taxon>
        <taxon>Murinae</taxon>
        <taxon>Mus</taxon>
        <taxon>Mus</taxon>
    </lineage>
</organism>
<accession>E9PZM4</accession>
<feature type="chain" id="PRO_0000425206" description="Chromodomain-helicase-DNA-binding protein 2">
    <location>
        <begin position="1"/>
        <end position="1827"/>
    </location>
</feature>
<feature type="domain" description="Chromo 1" evidence="4">
    <location>
        <begin position="261"/>
        <end position="353"/>
    </location>
</feature>
<feature type="domain" description="Chromo 2" evidence="4">
    <location>
        <begin position="378"/>
        <end position="456"/>
    </location>
</feature>
<feature type="domain" description="Helicase ATP-binding" evidence="5">
    <location>
        <begin position="496"/>
        <end position="666"/>
    </location>
</feature>
<feature type="domain" description="Helicase C-terminal" evidence="6">
    <location>
        <begin position="795"/>
        <end position="946"/>
    </location>
</feature>
<feature type="region of interest" description="Disordered" evidence="7">
    <location>
        <begin position="1"/>
        <end position="264"/>
    </location>
</feature>
<feature type="region of interest" description="Disordered" evidence="7">
    <location>
        <begin position="1030"/>
        <end position="1124"/>
    </location>
</feature>
<feature type="region of interest" description="Disordered" evidence="7">
    <location>
        <begin position="1329"/>
        <end position="1465"/>
    </location>
</feature>
<feature type="region of interest" description="CHD1 helical C-terminal domain (CHCT)" evidence="1">
    <location>
        <begin position="1464"/>
        <end position="1566"/>
    </location>
</feature>
<feature type="region of interest" description="Disordered" evidence="7">
    <location>
        <begin position="1556"/>
        <end position="1638"/>
    </location>
</feature>
<feature type="region of interest" description="Disordered" evidence="7">
    <location>
        <begin position="1679"/>
        <end position="1827"/>
    </location>
</feature>
<feature type="short sequence motif" description="DEAH box">
    <location>
        <begin position="617"/>
        <end position="620"/>
    </location>
</feature>
<feature type="compositionally biased region" description="Basic and acidic residues" evidence="7">
    <location>
        <begin position="1"/>
        <end position="14"/>
    </location>
</feature>
<feature type="compositionally biased region" description="Low complexity" evidence="7">
    <location>
        <begin position="15"/>
        <end position="75"/>
    </location>
</feature>
<feature type="compositionally biased region" description="Basic and acidic residues" evidence="7">
    <location>
        <begin position="81"/>
        <end position="101"/>
    </location>
</feature>
<feature type="compositionally biased region" description="Basic and acidic residues" evidence="7">
    <location>
        <begin position="115"/>
        <end position="128"/>
    </location>
</feature>
<feature type="compositionally biased region" description="Basic and acidic residues" evidence="7">
    <location>
        <begin position="146"/>
        <end position="155"/>
    </location>
</feature>
<feature type="compositionally biased region" description="Basic residues" evidence="7">
    <location>
        <begin position="175"/>
        <end position="204"/>
    </location>
</feature>
<feature type="compositionally biased region" description="Acidic residues" evidence="7">
    <location>
        <begin position="234"/>
        <end position="258"/>
    </location>
</feature>
<feature type="compositionally biased region" description="Basic and acidic residues" evidence="7">
    <location>
        <begin position="1037"/>
        <end position="1065"/>
    </location>
</feature>
<feature type="compositionally biased region" description="Basic and acidic residues" evidence="7">
    <location>
        <begin position="1347"/>
        <end position="1371"/>
    </location>
</feature>
<feature type="compositionally biased region" description="Basic and acidic residues" evidence="7">
    <location>
        <begin position="1396"/>
        <end position="1431"/>
    </location>
</feature>
<feature type="compositionally biased region" description="Basic and acidic residues" evidence="7">
    <location>
        <begin position="1565"/>
        <end position="1574"/>
    </location>
</feature>
<feature type="compositionally biased region" description="Polar residues" evidence="7">
    <location>
        <begin position="1584"/>
        <end position="1601"/>
    </location>
</feature>
<feature type="compositionally biased region" description="Basic and acidic residues" evidence="7">
    <location>
        <begin position="1697"/>
        <end position="1719"/>
    </location>
</feature>
<feature type="compositionally biased region" description="Basic and acidic residues" evidence="7">
    <location>
        <begin position="1738"/>
        <end position="1748"/>
    </location>
</feature>
<feature type="compositionally biased region" description="Basic and acidic residues" evidence="7">
    <location>
        <begin position="1759"/>
        <end position="1771"/>
    </location>
</feature>
<feature type="compositionally biased region" description="Basic and acidic residues" evidence="7">
    <location>
        <begin position="1794"/>
        <end position="1813"/>
    </location>
</feature>
<feature type="binding site" evidence="5">
    <location>
        <begin position="509"/>
        <end position="516"/>
    </location>
    <ligand>
        <name>ATP</name>
        <dbReference type="ChEBI" id="CHEBI:30616"/>
    </ligand>
</feature>
<feature type="modified residue" description="Phosphoserine" evidence="12">
    <location>
        <position position="207"/>
    </location>
</feature>
<feature type="modified residue" description="Phosphoserine" evidence="2">
    <location>
        <position position="208"/>
    </location>
</feature>
<feature type="modified residue" description="Phosphothreonine" evidence="12">
    <location>
        <position position="240"/>
    </location>
</feature>
<feature type="modified residue" description="Phosphoserine" evidence="12">
    <location>
        <position position="242"/>
    </location>
</feature>
<feature type="modified residue" description="Phosphoserine" evidence="2">
    <location>
        <position position="1085"/>
    </location>
</feature>
<feature type="modified residue" description="Phosphoserine" evidence="2">
    <location>
        <position position="1087"/>
    </location>
</feature>
<feature type="modified residue" description="Phosphoserine" evidence="2">
    <location>
        <position position="1365"/>
    </location>
</feature>
<feature type="modified residue" description="Phosphoserine" evidence="2">
    <location>
        <position position="1386"/>
    </location>
</feature>
<feature type="modified residue" description="Phosphoserine" evidence="2">
    <location>
        <position position="1806"/>
    </location>
</feature>
<comment type="function">
    <text evidence="11">ATP-dependent chromatin-remodeling factor that specifically binds to the promoter of target genes, leading to chromatin remodeling, possibly by promoting deposition of histone H3.3. Involved in myogenesis via interaction with MYOD1: binds to myogenic gene regulatory sequences and mediates incorporation of histone H3.3 prior to the onset of myogenic gene expression, promoting their expression.</text>
</comment>
<comment type="catalytic activity">
    <reaction evidence="3">
        <text>ATP + H2O = ADP + phosphate + H(+)</text>
        <dbReference type="Rhea" id="RHEA:13065"/>
        <dbReference type="ChEBI" id="CHEBI:15377"/>
        <dbReference type="ChEBI" id="CHEBI:15378"/>
        <dbReference type="ChEBI" id="CHEBI:30616"/>
        <dbReference type="ChEBI" id="CHEBI:43474"/>
        <dbReference type="ChEBI" id="CHEBI:456216"/>
    </reaction>
</comment>
<comment type="subunit">
    <text>Interacts with MYOD1. Interacts with histone H3.3.</text>
</comment>
<comment type="subcellular location">
    <subcellularLocation>
        <location evidence="11">Nucleus</location>
    </subcellularLocation>
    <text>Binds to myogenic gene promoters.</text>
</comment>
<comment type="tissue specificity">
    <text evidence="8">Widely expressed.</text>
</comment>
<comment type="domain">
    <text evidence="1">The CHD1 helical C-terminal domain (CHCT) may bind DNA and nucleosomes.</text>
</comment>
<comment type="disruption phenotype">
    <text evidence="8 9 10">Growth delay late in embryogenesis and perinatal lethality (PubMed:16810678). Heterozygous mice show decreased neonatal viability. Heterozygous mice display glomerulopathy, proteinuria and impaired kidney function. Glomerulopathy may be associated with anemia (PubMed:19142019). Heterozygous mutant also show increased extramedullary hematopoiesis and susceptibility to lymphomas, with defects in hematopoietic stem cell differentiation (PubMed:19137022).</text>
</comment>
<sequence length="1827" mass="210804">MMRNKDKSQEEDSSLHSNASSRSASEEVSGSDSGSQSESEQGSEPGSGHGSESNSSSESSESQSESESESAGSKSQPVLPEAKEKPASKKERIADVKKMWEEYPDVYGVRRSNRSRQEPSRFNVKEEASSGSESGSPKRRGQRQLKKQEKWKQDPSEDEQEQGTSAESEAEQKKGKARRPVPRRTVPKPQVKKQPKIQRGKRKKQESSDDDDDDDEAPKRQTRRRAAKNVSYKEDDDFETDSDDLIEMTGEGGDEQQDNSETIEKVLDSRLGKKGATGASTTVYAVEANGDPSDDFDTEREEGEVQYLIKWKGWSYIHSTWESEDSLQQQKVKGLKKLENFKKKEDEVKQWLGKVSPEDVEYFSCQQELASELNKQYQIVERVIAVKTSKSTLGQTDFPAHSRKPAPSNEPEYLCKWMGLPYSECSWEDEALIGKKFQNCIDSFHSRNNSKTIPTRECKALKQRPRFVALKKQPAYLGGESLELRDYQLEGLNWLAHSWCKSNSVILADEMGLGKTIQTISFLSYLFHQHQLYGPFLIVVPLSTLTSWQREFEIWAPEINVVVYIGDLMSRNTIREYEWIHSQTKRLKFNALITTYEILLKDKTVLGSINWAFLGVDEAHRLKNDDSLLYKTLIDFKSNHRLLITGTPLQNSLKELWSLLHFIMPEKFEFWEDFEEDHGKGRENGYQSLHKVLEPFLLRRVKKDVEKSLPAKVEQILRVEMSALQKQYYKWILTRNYKALAKGTRGSTSGFLNIVMELKKCCNHCYLIKAPEDSERESGQEVLQSLIRSSGKLILLDKLLTRLRERGNRVLIFSQMVRMLDILAEYLTIKHYPFQRLDGSIKGEIRKQALDHFNADGSEDFCFLLSTRAGGLGINLASADTVVIFDSDWNPQNDLQAQARAHRIGQKKQVNIYRLVTKGTVEEEIIERAKKKMVLDHLVIQRMDTTGRTVLENNSGRSNSNPFNKEELTAILKFGAEDLFKEIEGEESEPQEMDIDEILRLAETRENEVSTSATDELLSQFKVANFATMEDEEELEERPHKDWDEIIPEEQRKKVEEEERQKELEEIYMLPRIRSSTKKAQTNDSDSDTESKRQAQRSSASESETDDSDDDKKPKRRGRPRSVRKDLVEGFTDAEIRRFIKAYKKFGLPLERLECIARDAELVDKSVADLKRLGELIHNSCVSAMQEYEEQLKESTSEGKGPGKRRGPTIKISGVQVNVKSIIQHEEEFEMLHKSIPVDPEEKKKYCLTCRVKAAHFDVEWGVEDDSRLLLGIYEHGYGNWELIKTDPELKLTDKILPVETDKKPQGKQLQTRVDYLLKLLRKGLEKKGTVASGEEAKLKKRKPRVKKENKAPRLKDEHGLEPASPRHSDNPSEEGEVKDDGLEKSPTKKKQKKKENKENKEKPVSSRKDREGDKERKKSKDKKEKVKGGDGKSSSKSKRSQGPVHITAGSEPVPIGEDEDDDLDQETFSICKERMRPVKKALKQLDKPDKGLSVQEQLEHTRNCLLKIGDRIAECLKAYSDQEHIKLWRRNLWIFVSKFTEFDARKLHKLYKMAHKKRSQEEEEQKKKDDSLGGKKPFRPEASGSSRDSLISQSHTSHNLHPQKPHLPASHGPQMHGHPRDNYSHPNKRHFSNADRGDWQRERKFNYGGGNSAPWGGDRHHQYEQHWYKDHHYGDRRHMDAHRSGSYRPNNMSRKRPYEQYNSDRDHRGHRDYYDRHHHDSKRRRSDDFRPQNYHQQDFRRMSDHRPTMGYHGQGPSDHYRSFHTDKLGEYKQPMPSLHTALSDPRSPPSQKSPHDSKSPLDHRSPLERSLEQKNNPDYNWNVRKT</sequence>
<dbReference type="EC" id="3.6.4.-" evidence="3"/>
<dbReference type="EMBL" id="AC099699">
    <property type="status" value="NOT_ANNOTATED_CDS"/>
    <property type="molecule type" value="Genomic_DNA"/>
</dbReference>
<dbReference type="EMBL" id="AC154883">
    <property type="status" value="NOT_ANNOTATED_CDS"/>
    <property type="molecule type" value="Genomic_DNA"/>
</dbReference>
<dbReference type="CCDS" id="CCDS52274.1"/>
<dbReference type="RefSeq" id="NP_001074814.2">
    <property type="nucleotide sequence ID" value="NM_001081345.2"/>
</dbReference>
<dbReference type="SMR" id="E9PZM4"/>
<dbReference type="BioGRID" id="232602">
    <property type="interactions" value="4"/>
</dbReference>
<dbReference type="FunCoup" id="E9PZM4">
    <property type="interactions" value="3388"/>
</dbReference>
<dbReference type="IntAct" id="E9PZM4">
    <property type="interactions" value="1"/>
</dbReference>
<dbReference type="MINT" id="E9PZM4"/>
<dbReference type="STRING" id="10090.ENSMUSP00000126352"/>
<dbReference type="GlyGen" id="E9PZM4">
    <property type="glycosylation" value="2 sites, 2 N-linked glycans (2 sites)"/>
</dbReference>
<dbReference type="iPTMnet" id="E9PZM4"/>
<dbReference type="PhosphoSitePlus" id="E9PZM4"/>
<dbReference type="jPOST" id="E9PZM4"/>
<dbReference type="PaxDb" id="10090-ENSMUSP00000126352"/>
<dbReference type="PeptideAtlas" id="E9PZM4"/>
<dbReference type="ProteomicsDB" id="281208"/>
<dbReference type="Pumba" id="E9PZM4"/>
<dbReference type="Ensembl" id="ENSMUST00000169922.9">
    <property type="protein sequence ID" value="ENSMUSP00000126352.3"/>
    <property type="gene ID" value="ENSMUSG00000078671.12"/>
</dbReference>
<dbReference type="GeneID" id="244059"/>
<dbReference type="KEGG" id="mmu:244059"/>
<dbReference type="UCSC" id="uc009hrd.2">
    <property type="organism name" value="mouse"/>
</dbReference>
<dbReference type="AGR" id="MGI:2448567"/>
<dbReference type="CTD" id="1106"/>
<dbReference type="MGI" id="MGI:2448567">
    <property type="gene designation" value="Chd2"/>
</dbReference>
<dbReference type="VEuPathDB" id="HostDB:ENSMUSG00000078671"/>
<dbReference type="eggNOG" id="KOG0384">
    <property type="taxonomic scope" value="Eukaryota"/>
</dbReference>
<dbReference type="GeneTree" id="ENSGT00940000155888"/>
<dbReference type="HOGENOM" id="CLU_000315_8_1_1"/>
<dbReference type="InParanoid" id="E9PZM4"/>
<dbReference type="OMA" id="MLHAWCK"/>
<dbReference type="OrthoDB" id="5857104at2759"/>
<dbReference type="PhylomeDB" id="E9PZM4"/>
<dbReference type="TreeFam" id="TF313461"/>
<dbReference type="BioGRID-ORCS" id="244059">
    <property type="hits" value="9 hits in 83 CRISPR screens"/>
</dbReference>
<dbReference type="ChiTaRS" id="Chd2">
    <property type="organism name" value="mouse"/>
</dbReference>
<dbReference type="PRO" id="PR:E9PZM4"/>
<dbReference type="Proteomes" id="UP000000589">
    <property type="component" value="Chromosome 7"/>
</dbReference>
<dbReference type="RNAct" id="E9PZM4">
    <property type="molecule type" value="protein"/>
</dbReference>
<dbReference type="Bgee" id="ENSMUSG00000078671">
    <property type="expression patterns" value="Expressed in ear vesicle and 258 other cell types or tissues"/>
</dbReference>
<dbReference type="ExpressionAtlas" id="E9PZM4">
    <property type="expression patterns" value="baseline and differential"/>
</dbReference>
<dbReference type="GO" id="GO:0005634">
    <property type="term" value="C:nucleus"/>
    <property type="evidence" value="ECO:0000314"/>
    <property type="project" value="UniProtKB"/>
</dbReference>
<dbReference type="GO" id="GO:0005524">
    <property type="term" value="F:ATP binding"/>
    <property type="evidence" value="ECO:0007669"/>
    <property type="project" value="UniProtKB-KW"/>
</dbReference>
<dbReference type="GO" id="GO:0016887">
    <property type="term" value="F:ATP hydrolysis activity"/>
    <property type="evidence" value="ECO:0007669"/>
    <property type="project" value="RHEA"/>
</dbReference>
<dbReference type="GO" id="GO:0004386">
    <property type="term" value="F:helicase activity"/>
    <property type="evidence" value="ECO:0007669"/>
    <property type="project" value="UniProtKB-KW"/>
</dbReference>
<dbReference type="GO" id="GO:0042393">
    <property type="term" value="F:histone binding"/>
    <property type="evidence" value="ECO:0000314"/>
    <property type="project" value="UniProtKB"/>
</dbReference>
<dbReference type="GO" id="GO:0000978">
    <property type="term" value="F:RNA polymerase II cis-regulatory region sequence-specific DNA binding"/>
    <property type="evidence" value="ECO:0000315"/>
    <property type="project" value="UniProtKB"/>
</dbReference>
<dbReference type="GO" id="GO:0006325">
    <property type="term" value="P:chromatin organization"/>
    <property type="evidence" value="ECO:0007669"/>
    <property type="project" value="UniProtKB-KW"/>
</dbReference>
<dbReference type="GO" id="GO:0006974">
    <property type="term" value="P:DNA damage response"/>
    <property type="evidence" value="ECO:0000315"/>
    <property type="project" value="MGI"/>
</dbReference>
<dbReference type="GO" id="GO:0010467">
    <property type="term" value="P:gene expression"/>
    <property type="evidence" value="ECO:0000315"/>
    <property type="project" value="MGI"/>
</dbReference>
<dbReference type="GO" id="GO:0060218">
    <property type="term" value="P:hematopoietic stem cell differentiation"/>
    <property type="evidence" value="ECO:0000315"/>
    <property type="project" value="MGI"/>
</dbReference>
<dbReference type="GO" id="GO:0007517">
    <property type="term" value="P:muscle organ development"/>
    <property type="evidence" value="ECO:0000315"/>
    <property type="project" value="UniProtKB"/>
</dbReference>
<dbReference type="CDD" id="cd18666">
    <property type="entry name" value="CD1_tandem_CHD1-2_like"/>
    <property type="match status" value="1"/>
</dbReference>
<dbReference type="CDD" id="cd18661">
    <property type="entry name" value="CD2_tandem_CHD1-2_like"/>
    <property type="match status" value="1"/>
</dbReference>
<dbReference type="CDD" id="cd18054">
    <property type="entry name" value="DEXHc_CHD2"/>
    <property type="match status" value="1"/>
</dbReference>
<dbReference type="CDD" id="cd18793">
    <property type="entry name" value="SF2_C_SNF"/>
    <property type="match status" value="1"/>
</dbReference>
<dbReference type="FunFam" id="1.10.10.60:FF:000106">
    <property type="entry name" value="Chromodomain-helicase-DNA-binding protein 2 isoform 1"/>
    <property type="match status" value="1"/>
</dbReference>
<dbReference type="FunFam" id="2.40.50.40:FF:000008">
    <property type="entry name" value="Chromodomain-helicase-DNA-binding protein 2 isoform 1"/>
    <property type="match status" value="1"/>
</dbReference>
<dbReference type="FunFam" id="2.40.50.40:FF:000014">
    <property type="entry name" value="Chromodomain-helicase-DNA-binding protein 2 isoform 1"/>
    <property type="match status" value="1"/>
</dbReference>
<dbReference type="FunFam" id="3.40.50.10810:FF:000007">
    <property type="entry name" value="Chromodomain-helicase-DNA-binding protein 2 isoform 1"/>
    <property type="match status" value="1"/>
</dbReference>
<dbReference type="FunFam" id="3.40.50.300:FF:000130">
    <property type="entry name" value="Chromodomain-helicase-DNA-binding protein 2 isoform 1"/>
    <property type="match status" value="1"/>
</dbReference>
<dbReference type="Gene3D" id="2.40.50.40">
    <property type="match status" value="2"/>
</dbReference>
<dbReference type="Gene3D" id="6.10.140.1440">
    <property type="match status" value="1"/>
</dbReference>
<dbReference type="Gene3D" id="1.10.10.60">
    <property type="entry name" value="Homeodomain-like"/>
    <property type="match status" value="1"/>
</dbReference>
<dbReference type="Gene3D" id="3.40.50.300">
    <property type="entry name" value="P-loop containing nucleotide triphosphate hydrolases"/>
    <property type="match status" value="1"/>
</dbReference>
<dbReference type="Gene3D" id="3.40.50.10810">
    <property type="entry name" value="Tandem AAA-ATPase domain"/>
    <property type="match status" value="1"/>
</dbReference>
<dbReference type="InterPro" id="IPR040793">
    <property type="entry name" value="CDH1_2_SANT_HL1"/>
</dbReference>
<dbReference type="InterPro" id="IPR056302">
    <property type="entry name" value="CHD1-2/Hrp3_HTH"/>
</dbReference>
<dbReference type="InterPro" id="IPR025260">
    <property type="entry name" value="CHD1-like_C"/>
</dbReference>
<dbReference type="InterPro" id="IPR016197">
    <property type="entry name" value="Chromo-like_dom_sf"/>
</dbReference>
<dbReference type="InterPro" id="IPR000953">
    <property type="entry name" value="Chromo/chromo_shadow_dom"/>
</dbReference>
<dbReference type="InterPro" id="IPR023780">
    <property type="entry name" value="Chromo_domain"/>
</dbReference>
<dbReference type="InterPro" id="IPR023779">
    <property type="entry name" value="Chromodomain_CS"/>
</dbReference>
<dbReference type="InterPro" id="IPR014001">
    <property type="entry name" value="Helicase_ATP-bd"/>
</dbReference>
<dbReference type="InterPro" id="IPR001650">
    <property type="entry name" value="Helicase_C-like"/>
</dbReference>
<dbReference type="InterPro" id="IPR027417">
    <property type="entry name" value="P-loop_NTPase"/>
</dbReference>
<dbReference type="InterPro" id="IPR038718">
    <property type="entry name" value="SNF2-like_sf"/>
</dbReference>
<dbReference type="InterPro" id="IPR049730">
    <property type="entry name" value="SNF2/RAD54-like_C"/>
</dbReference>
<dbReference type="InterPro" id="IPR000330">
    <property type="entry name" value="SNF2_N"/>
</dbReference>
<dbReference type="PANTHER" id="PTHR45623:SF19">
    <property type="entry name" value="CHROMODOMAIN-HELICASE-DNA-BINDING PROTEIN 2"/>
    <property type="match status" value="1"/>
</dbReference>
<dbReference type="PANTHER" id="PTHR45623">
    <property type="entry name" value="CHROMODOMAIN-HELICASE-DNA-BINDING PROTEIN 3-RELATED-RELATED"/>
    <property type="match status" value="1"/>
</dbReference>
<dbReference type="Pfam" id="PF18375">
    <property type="entry name" value="CDH1_2_SANT_HL1"/>
    <property type="match status" value="1"/>
</dbReference>
<dbReference type="Pfam" id="PF13907">
    <property type="entry name" value="CHD1-like_C"/>
    <property type="match status" value="1"/>
</dbReference>
<dbReference type="Pfam" id="PF00385">
    <property type="entry name" value="Chromo"/>
    <property type="match status" value="2"/>
</dbReference>
<dbReference type="Pfam" id="PF00271">
    <property type="entry name" value="Helicase_C"/>
    <property type="match status" value="1"/>
</dbReference>
<dbReference type="Pfam" id="PF23588">
    <property type="entry name" value="HTH_CHD1_Hrp3"/>
    <property type="match status" value="1"/>
</dbReference>
<dbReference type="Pfam" id="PF00176">
    <property type="entry name" value="SNF2-rel_dom"/>
    <property type="match status" value="1"/>
</dbReference>
<dbReference type="SMART" id="SM00298">
    <property type="entry name" value="CHROMO"/>
    <property type="match status" value="2"/>
</dbReference>
<dbReference type="SMART" id="SM00487">
    <property type="entry name" value="DEXDc"/>
    <property type="match status" value="1"/>
</dbReference>
<dbReference type="SMART" id="SM01176">
    <property type="entry name" value="DUF4208"/>
    <property type="match status" value="1"/>
</dbReference>
<dbReference type="SMART" id="SM00490">
    <property type="entry name" value="HELICc"/>
    <property type="match status" value="1"/>
</dbReference>
<dbReference type="SUPFAM" id="SSF54160">
    <property type="entry name" value="Chromo domain-like"/>
    <property type="match status" value="2"/>
</dbReference>
<dbReference type="SUPFAM" id="SSF52540">
    <property type="entry name" value="P-loop containing nucleoside triphosphate hydrolases"/>
    <property type="match status" value="2"/>
</dbReference>
<dbReference type="PROSITE" id="PS00598">
    <property type="entry name" value="CHROMO_1"/>
    <property type="match status" value="2"/>
</dbReference>
<dbReference type="PROSITE" id="PS50013">
    <property type="entry name" value="CHROMO_2"/>
    <property type="match status" value="2"/>
</dbReference>
<dbReference type="PROSITE" id="PS51192">
    <property type="entry name" value="HELICASE_ATP_BIND_1"/>
    <property type="match status" value="1"/>
</dbReference>
<dbReference type="PROSITE" id="PS51194">
    <property type="entry name" value="HELICASE_CTER"/>
    <property type="match status" value="1"/>
</dbReference>
<name>CHD2_MOUSE</name>
<protein>
    <recommendedName>
        <fullName>Chromodomain-helicase-DNA-binding protein 2</fullName>
        <shortName>CHD-2</shortName>
        <ecNumber evidence="3">3.6.4.-</ecNumber>
    </recommendedName>
    <alternativeName>
        <fullName>ATP-dependent helicase CHD2</fullName>
    </alternativeName>
</protein>
<reference key="1">
    <citation type="journal article" date="2009" name="PLoS Biol.">
        <title>Lineage-specific biology revealed by a finished genome assembly of the mouse.</title>
        <authorList>
            <person name="Church D.M."/>
            <person name="Goodstadt L."/>
            <person name="Hillier L.W."/>
            <person name="Zody M.C."/>
            <person name="Goldstein S."/>
            <person name="She X."/>
            <person name="Bult C.J."/>
            <person name="Agarwala R."/>
            <person name="Cherry J.L."/>
            <person name="DiCuccio M."/>
            <person name="Hlavina W."/>
            <person name="Kapustin Y."/>
            <person name="Meric P."/>
            <person name="Maglott D."/>
            <person name="Birtle Z."/>
            <person name="Marques A.C."/>
            <person name="Graves T."/>
            <person name="Zhou S."/>
            <person name="Teague B."/>
            <person name="Potamousis K."/>
            <person name="Churas C."/>
            <person name="Place M."/>
            <person name="Herschleb J."/>
            <person name="Runnheim R."/>
            <person name="Forrest D."/>
            <person name="Amos-Landgraf J."/>
            <person name="Schwartz D.C."/>
            <person name="Cheng Z."/>
            <person name="Lindblad-Toh K."/>
            <person name="Eichler E.E."/>
            <person name="Ponting C.P."/>
        </authorList>
    </citation>
    <scope>NUCLEOTIDE SEQUENCE [LARGE SCALE GENOMIC DNA]</scope>
    <source>
        <strain>C57BL/6J</strain>
    </source>
</reference>
<reference key="2">
    <citation type="journal article" date="2006" name="J. Cell. Physiol.">
        <title>Mutation of the SNF2 family member Chd2 affects mouse development and survival.</title>
        <authorList>
            <person name="Marfella C.G."/>
            <person name="Ohkawa Y."/>
            <person name="Coles A.H."/>
            <person name="Garlick D.S."/>
            <person name="Jones S.N."/>
            <person name="Imbalzano A.N."/>
        </authorList>
    </citation>
    <scope>DISRUPTION PHENOTYPE</scope>
    <scope>TISSUE SPECIFICITY</scope>
</reference>
<reference key="3">
    <citation type="journal article" date="2007" name="J. Cell. Physiol.">
        <authorList>
            <person name="Marfella C.G."/>
            <person name="Ohkawa Y."/>
            <person name="Coles A.H."/>
            <person name="Garlick D.S."/>
            <person name="Jones S.N."/>
            <person name="Imbalzano A.N."/>
        </authorList>
    </citation>
    <scope>ERRATUM OF PUBMED:16810678</scope>
</reference>
<reference key="4">
    <citation type="journal article" date="2008" name="Kidney Blood Press. Res.">
        <title>A mutation in the mouse Chd2 chromatin remodeling enzyme results in a complex renal phenotype.</title>
        <authorList>
            <person name="Marfella C.G."/>
            <person name="Henninger N."/>
            <person name="LeBlanc S.E."/>
            <person name="Krishnan N."/>
            <person name="Garlick D.S."/>
            <person name="Holzman L.B."/>
            <person name="Imbalzano A.N."/>
        </authorList>
    </citation>
    <scope>DISRUPTION PHENOTYPE</scope>
</reference>
<reference key="5">
    <citation type="journal article" date="2009" name="Oncogene">
        <title>Role of chromodomain helicase DNA-binding protein 2 in DNA damage response signaling and tumorigenesis.</title>
        <authorList>
            <person name="Nagarajan P."/>
            <person name="Onami T.M."/>
            <person name="Rajagopalan S."/>
            <person name="Kania S."/>
            <person name="Donnell R."/>
            <person name="Venkatachalam S."/>
        </authorList>
    </citation>
    <scope>DISRUPTION PHENOTYPE</scope>
</reference>
<reference key="6">
    <citation type="journal article" date="2010" name="Cell">
        <title>A tissue-specific atlas of mouse protein phosphorylation and expression.</title>
        <authorList>
            <person name="Huttlin E.L."/>
            <person name="Jedrychowski M.P."/>
            <person name="Elias J.E."/>
            <person name="Goswami T."/>
            <person name="Rad R."/>
            <person name="Beausoleil S.A."/>
            <person name="Villen J."/>
            <person name="Haas W."/>
            <person name="Sowa M.E."/>
            <person name="Gygi S.P."/>
        </authorList>
    </citation>
    <scope>PHOSPHORYLATION [LARGE SCALE ANALYSIS] AT SER-207; THR-240 AND SER-242</scope>
    <scope>IDENTIFICATION BY MASS SPECTROMETRY [LARGE SCALE ANALYSIS]</scope>
    <source>
        <tissue>Spleen</tissue>
        <tissue>Testis</tissue>
    </source>
</reference>
<reference key="7">
    <citation type="journal article" date="2012" name="EMBO J.">
        <title>Chd2 interacts with H3.3 to determine myogenic cell fate.</title>
        <authorList>
            <person name="Harada A."/>
            <person name="Okada S."/>
            <person name="Konno D."/>
            <person name="Odawara J."/>
            <person name="Yoshimi T."/>
            <person name="Yoshimura S."/>
            <person name="Kumamaru H."/>
            <person name="Saiwai H."/>
            <person name="Tsubota T."/>
            <person name="Kurumizaka H."/>
            <person name="Akashi K."/>
            <person name="Tachibana T."/>
            <person name="Imbalzano A.N."/>
            <person name="Ohkawa Y."/>
        </authorList>
    </citation>
    <scope>FUNCTION</scope>
    <scope>SUBCELLULAR LOCATION</scope>
    <scope>DNA-BINDING</scope>
</reference>